<protein>
    <recommendedName>
        <fullName evidence="4">Short chain dehydrogenase virK</fullName>
        <ecNumber evidence="6">1.-.-.-</ecNumber>
    </recommendedName>
    <alternativeName>
        <fullName evidence="4">Trichoxide biosynthesis protein virK</fullName>
    </alternativeName>
    <alternativeName>
        <fullName evidence="4">Virensol biosynthesis cluster protein K</fullName>
    </alternativeName>
</protein>
<keyword id="KW-0521">NADP</keyword>
<keyword id="KW-0560">Oxidoreductase</keyword>
<keyword id="KW-1185">Reference proteome</keyword>
<evidence type="ECO:0000250" key="1">
    <source>
        <dbReference type="UniProtKB" id="L0E2Z4"/>
    </source>
</evidence>
<evidence type="ECO:0000250" key="2">
    <source>
        <dbReference type="UniProtKB" id="O93868"/>
    </source>
</evidence>
<evidence type="ECO:0000269" key="3">
    <source>
    </source>
</evidence>
<evidence type="ECO:0000303" key="4">
    <source>
    </source>
</evidence>
<evidence type="ECO:0000305" key="5"/>
<evidence type="ECO:0000305" key="6">
    <source>
    </source>
</evidence>
<sequence>MPSYVITGASRGLGFEFVRQLSSDPNNTVIGLVRDKVTTEQAVAQELAGRSNIHILQADITDYEAVKDAVTATAQITGGVLDYLVANAAYISEFDAYDSIGVLGNSPKELEEDLFKSFKVNVIANVHLFNLYMPLILAGNIKKVIALSTGMADLDSTNKFELQVAPGYAISKAAMNTAIGKFHAQYKKDGVLFMSISPGVVDTGHYKNATPEQMAKVGGMFQNFVTYNPDFKGPASPEASVKDVISVWENASIEAGSGGSFVSHHGNKKWL</sequence>
<comment type="function">
    <text evidence="3">Short chain dehydrogenase; part of the gene cluster that mediates the biosynthesis of virensols and trichoxide, fungal natural products that contain or are derived from a salicylaldehyde core (PubMed:31790246). The pathway begins with the synthesis of the reduced chain in virensol C by the highly reducing polyketide synthase virA via condensation of one acetate and 8 malonate units (PubMed:31790246). VirA has interesting programming rules since the first 2 ketides are fully reduced, the 3 following ketides undergo beta-dehydration, and the last 3 ketides are only reduced to beta-hydroxys to yield the trihydroxy portion (PubMed:31790246). The production of aldehyde virensol C by virA alone is surprising, since virA does not contain a reductase (R) domain that is typically associated with reductive product release in HRPKS (PubMed:31790246). The cupin-domain enzyme virC is involved in enhancing virA product turnover (PubMed:31790246). The short-chain dehydrogenase virB then oxidizes the C-7 alcohol of virensol C to a ketone, yielding virensol D (PubMed:31790246). Virensol D is further transformed to salicylaldehyde 5-deoxyaurocitrin by the short-chain dehydrogenase virD (PubMed:31790246). VirD catalyzes the dehydrogenation of C-3 to form the beta-ketone aldehyde, which is followed by the generation of the nucleophilic C-2 that is required for the intramolecular aldol condensation between C-2 and C-7, itself followed by dehydration and aromatization which leads to salicylaldehyde 5-deoxyaurocitrin (PubMed:31790246). While the dehydrogenation of virensol D is definitely catalyzed by virD, the aldol condensation and dehydration may be uncatalyzed or assisted by virD (PubMed:31790246). The short chain dehydrogenase virG then converts salicylaldehyde 5-deoxyaurocitrin into virensol B which is further hydroxylated by the cytochrome P450 monooxygenase virE to yield the hydroquinone virensol A (PubMed:31790246). VirI then may oxidize virensol A to form the quinone, while virH performs the epoxidation (PubMed:31790246). Finally, the two remaining short-chain dehydrogenases, virK and virL, are probably responsible for reducing the ketones to the corresponding alcohols to furnish the epoxycyclohexanol structure in trichoxide (PubMed:31790246).</text>
</comment>
<comment type="pathway">
    <text evidence="3">Secondary metabolite biosynthesis.</text>
</comment>
<comment type="similarity">
    <text evidence="5">Belongs to the short-chain dehydrogenases/reductases (SDR) family.</text>
</comment>
<proteinExistence type="inferred from homology"/>
<gene>
    <name evidence="4" type="primary">virK</name>
    <name type="ORF">TRIVIDRAFT_47153</name>
</gene>
<feature type="chain" id="PRO_0000449283" description="Short chain dehydrogenase virK">
    <location>
        <begin position="1"/>
        <end position="271"/>
    </location>
</feature>
<feature type="active site" description="Proton donor" evidence="2">
    <location>
        <position position="168"/>
    </location>
</feature>
<feature type="active site" description="Lowers pKa of active site Tyr" evidence="2">
    <location>
        <position position="172"/>
    </location>
</feature>
<feature type="binding site" evidence="1">
    <location>
        <position position="13"/>
    </location>
    <ligand>
        <name>NADP(+)</name>
        <dbReference type="ChEBI" id="CHEBI:58349"/>
    </ligand>
</feature>
<feature type="binding site" evidence="1">
    <location>
        <position position="59"/>
    </location>
    <ligand>
        <name>NADP(+)</name>
        <dbReference type="ChEBI" id="CHEBI:58349"/>
    </ligand>
</feature>
<feature type="binding site" evidence="2">
    <location>
        <position position="87"/>
    </location>
    <ligand>
        <name>NADP(+)</name>
        <dbReference type="ChEBI" id="CHEBI:58349"/>
    </ligand>
</feature>
<feature type="binding site" evidence="2">
    <location>
        <position position="168"/>
    </location>
    <ligand>
        <name>NADP(+)</name>
        <dbReference type="ChEBI" id="CHEBI:58349"/>
    </ligand>
</feature>
<feature type="binding site" evidence="2">
    <location>
        <position position="172"/>
    </location>
    <ligand>
        <name>NADP(+)</name>
        <dbReference type="ChEBI" id="CHEBI:58349"/>
    </ligand>
</feature>
<feature type="binding site" evidence="2">
    <location>
        <position position="201"/>
    </location>
    <ligand>
        <name>NADP(+)</name>
        <dbReference type="ChEBI" id="CHEBI:58349"/>
    </ligand>
</feature>
<feature type="binding site" evidence="1">
    <location>
        <position position="203"/>
    </location>
    <ligand>
        <name>NADP(+)</name>
        <dbReference type="ChEBI" id="CHEBI:58349"/>
    </ligand>
</feature>
<name>VIRK_HYPVG</name>
<organism>
    <name type="scientific">Hypocrea virens (strain Gv29-8 / FGSC 10586)</name>
    <name type="common">Gliocladium virens</name>
    <name type="synonym">Trichoderma virens</name>
    <dbReference type="NCBI Taxonomy" id="413071"/>
    <lineage>
        <taxon>Eukaryota</taxon>
        <taxon>Fungi</taxon>
        <taxon>Dikarya</taxon>
        <taxon>Ascomycota</taxon>
        <taxon>Pezizomycotina</taxon>
        <taxon>Sordariomycetes</taxon>
        <taxon>Hypocreomycetidae</taxon>
        <taxon>Hypocreales</taxon>
        <taxon>Hypocreaceae</taxon>
        <taxon>Trichoderma</taxon>
    </lineage>
</organism>
<dbReference type="EC" id="1.-.-.-" evidence="6"/>
<dbReference type="EMBL" id="ABDF02000086">
    <property type="protein sequence ID" value="EHK18428.1"/>
    <property type="molecule type" value="Genomic_DNA"/>
</dbReference>
<dbReference type="RefSeq" id="XP_013952628.1">
    <property type="nucleotide sequence ID" value="XM_014097153.1"/>
</dbReference>
<dbReference type="SMR" id="G9N4A2"/>
<dbReference type="EnsemblFungi" id="EHK18428">
    <property type="protein sequence ID" value="EHK18428"/>
    <property type="gene ID" value="TRIVIDRAFT_47153"/>
</dbReference>
<dbReference type="GeneID" id="25794615"/>
<dbReference type="VEuPathDB" id="FungiDB:TRIVIDRAFT_47153"/>
<dbReference type="eggNOG" id="KOG1611">
    <property type="taxonomic scope" value="Eukaryota"/>
</dbReference>
<dbReference type="HOGENOM" id="CLU_010194_9_2_1"/>
<dbReference type="InParanoid" id="G9N4A2"/>
<dbReference type="OMA" id="NIYLVCA"/>
<dbReference type="OrthoDB" id="7289984at2759"/>
<dbReference type="Proteomes" id="UP000007115">
    <property type="component" value="Unassembled WGS sequence"/>
</dbReference>
<dbReference type="GO" id="GO:0016616">
    <property type="term" value="F:oxidoreductase activity, acting on the CH-OH group of donors, NAD or NADP as acceptor"/>
    <property type="evidence" value="ECO:0007669"/>
    <property type="project" value="TreeGrafter"/>
</dbReference>
<dbReference type="CDD" id="cd05325">
    <property type="entry name" value="carb_red_sniffer_like_SDR_c"/>
    <property type="match status" value="1"/>
</dbReference>
<dbReference type="Gene3D" id="3.40.50.720">
    <property type="entry name" value="NAD(P)-binding Rossmann-like Domain"/>
    <property type="match status" value="1"/>
</dbReference>
<dbReference type="InterPro" id="IPR036291">
    <property type="entry name" value="NAD(P)-bd_dom_sf"/>
</dbReference>
<dbReference type="InterPro" id="IPR052184">
    <property type="entry name" value="SDR_enzymes"/>
</dbReference>
<dbReference type="InterPro" id="IPR002347">
    <property type="entry name" value="SDR_fam"/>
</dbReference>
<dbReference type="PANTHER" id="PTHR45458:SF3">
    <property type="entry name" value="CHAIN DEHYDROGENASE (ATSC), PUTATIVE-RELATED"/>
    <property type="match status" value="1"/>
</dbReference>
<dbReference type="PANTHER" id="PTHR45458">
    <property type="entry name" value="SHORT-CHAIN DEHYDROGENASE/REDUCTASE SDR"/>
    <property type="match status" value="1"/>
</dbReference>
<dbReference type="Pfam" id="PF00106">
    <property type="entry name" value="adh_short"/>
    <property type="match status" value="1"/>
</dbReference>
<dbReference type="PRINTS" id="PR00081">
    <property type="entry name" value="GDHRDH"/>
</dbReference>
<dbReference type="SUPFAM" id="SSF51735">
    <property type="entry name" value="NAD(P)-binding Rossmann-fold domains"/>
    <property type="match status" value="1"/>
</dbReference>
<reference key="1">
    <citation type="journal article" date="2011" name="Genome Biol.">
        <title>Comparative genome sequence analysis underscores mycoparasitism as the ancestral life style of Trichoderma.</title>
        <authorList>
            <person name="Kubicek C.P."/>
            <person name="Herrera-Estrella A."/>
            <person name="Seidl-Seiboth V."/>
            <person name="Martinez D.A."/>
            <person name="Druzhinina I.S."/>
            <person name="Thon M."/>
            <person name="Zeilinger S."/>
            <person name="Casas-Flores S."/>
            <person name="Horwitz B.A."/>
            <person name="Mukherjee P.K."/>
            <person name="Mukherjee M."/>
            <person name="Kredics L."/>
            <person name="Alcaraz L.D."/>
            <person name="Aerts A."/>
            <person name="Antal Z."/>
            <person name="Atanasova L."/>
            <person name="Cervantes-Badillo M.G."/>
            <person name="Challacombe J."/>
            <person name="Chertkov O."/>
            <person name="McCluskey K."/>
            <person name="Coulpier F."/>
            <person name="Deshpande N."/>
            <person name="von Doehren H."/>
            <person name="Ebbole D.J."/>
            <person name="Esquivel-Naranjo E.U."/>
            <person name="Fekete E."/>
            <person name="Flipphi M."/>
            <person name="Glaser F."/>
            <person name="Gomez-Rodriguez E.Y."/>
            <person name="Gruber S."/>
            <person name="Han C."/>
            <person name="Henrissat B."/>
            <person name="Hermosa R."/>
            <person name="Hernandez-Onate M."/>
            <person name="Karaffa L."/>
            <person name="Kosti I."/>
            <person name="Le Crom S."/>
            <person name="Lindquist E."/>
            <person name="Lucas S."/>
            <person name="Luebeck M."/>
            <person name="Luebeck P.S."/>
            <person name="Margeot A."/>
            <person name="Metz B."/>
            <person name="Misra M."/>
            <person name="Nevalainen H."/>
            <person name="Omann M."/>
            <person name="Packer N."/>
            <person name="Perrone G."/>
            <person name="Uresti-Rivera E.E."/>
            <person name="Salamov A."/>
            <person name="Schmoll M."/>
            <person name="Seiboth B."/>
            <person name="Shapiro H."/>
            <person name="Sukno S."/>
            <person name="Tamayo-Ramos J.A."/>
            <person name="Tisch D."/>
            <person name="Wiest A."/>
            <person name="Wilkinson H.H."/>
            <person name="Zhang M."/>
            <person name="Coutinho P.M."/>
            <person name="Kenerley C.M."/>
            <person name="Monte E."/>
            <person name="Baker S.E."/>
            <person name="Grigoriev I.V."/>
        </authorList>
    </citation>
    <scope>NUCLEOTIDE SEQUENCE [LARGE SCALE GENOMIC DNA]</scope>
    <source>
        <strain>Gv29-8 / FGSC 10586</strain>
    </source>
</reference>
<reference key="2">
    <citation type="journal article" date="2019" name="J. Am. Chem. Soc.">
        <title>Fungal highly reducing polyketide synthases biosynthesize salicylaldehydes that are precursors to epoxycyclohexenol natural products.</title>
        <authorList>
            <person name="Liu L."/>
            <person name="Tang M.C."/>
            <person name="Tang Y."/>
        </authorList>
    </citation>
    <scope>FUNCTION</scope>
    <scope>PATHWAY</scope>
</reference>
<accession>G9N4A2</accession>